<name>HIS7_LEGPL</name>
<protein>
    <recommendedName>
        <fullName evidence="1">Histidine biosynthesis bifunctional protein HisB</fullName>
    </recommendedName>
    <domain>
        <recommendedName>
            <fullName evidence="1">Histidinol-phosphatase</fullName>
            <ecNumber evidence="1">3.1.3.15</ecNumber>
        </recommendedName>
    </domain>
    <domain>
        <recommendedName>
            <fullName evidence="1">Imidazoleglycerol-phosphate dehydratase</fullName>
            <shortName evidence="1">IGPD</shortName>
            <ecNumber evidence="1">4.2.1.19</ecNumber>
        </recommendedName>
    </domain>
</protein>
<reference key="1">
    <citation type="journal article" date="2004" name="Nat. Genet.">
        <title>Evidence in the Legionella pneumophila genome for exploitation of host cell functions and high genome plasticity.</title>
        <authorList>
            <person name="Cazalet C."/>
            <person name="Rusniok C."/>
            <person name="Brueggemann H."/>
            <person name="Zidane N."/>
            <person name="Magnier A."/>
            <person name="Ma L."/>
            <person name="Tichit M."/>
            <person name="Jarraud S."/>
            <person name="Bouchier C."/>
            <person name="Vandenesch F."/>
            <person name="Kunst F."/>
            <person name="Etienne J."/>
            <person name="Glaser P."/>
            <person name="Buchrieser C."/>
        </authorList>
    </citation>
    <scope>NUCLEOTIDE SEQUENCE [LARGE SCALE GENOMIC DNA]</scope>
    <source>
        <strain>Lens</strain>
    </source>
</reference>
<proteinExistence type="inferred from homology"/>
<gene>
    <name evidence="1" type="primary">hisB</name>
    <name type="ordered locus">lpl1205</name>
</gene>
<organism>
    <name type="scientific">Legionella pneumophila (strain Lens)</name>
    <dbReference type="NCBI Taxonomy" id="297245"/>
    <lineage>
        <taxon>Bacteria</taxon>
        <taxon>Pseudomonadati</taxon>
        <taxon>Pseudomonadota</taxon>
        <taxon>Gammaproteobacteria</taxon>
        <taxon>Legionellales</taxon>
        <taxon>Legionellaceae</taxon>
        <taxon>Legionella</taxon>
    </lineage>
</organism>
<comment type="catalytic activity">
    <reaction evidence="1">
        <text>D-erythro-1-(imidazol-4-yl)glycerol 3-phosphate = 3-(imidazol-4-yl)-2-oxopropyl phosphate + H2O</text>
        <dbReference type="Rhea" id="RHEA:11040"/>
        <dbReference type="ChEBI" id="CHEBI:15377"/>
        <dbReference type="ChEBI" id="CHEBI:57766"/>
        <dbReference type="ChEBI" id="CHEBI:58278"/>
        <dbReference type="EC" id="4.2.1.19"/>
    </reaction>
</comment>
<comment type="catalytic activity">
    <reaction evidence="1">
        <text>L-histidinol phosphate + H2O = L-histidinol + phosphate</text>
        <dbReference type="Rhea" id="RHEA:14465"/>
        <dbReference type="ChEBI" id="CHEBI:15377"/>
        <dbReference type="ChEBI" id="CHEBI:43474"/>
        <dbReference type="ChEBI" id="CHEBI:57699"/>
        <dbReference type="ChEBI" id="CHEBI:57980"/>
        <dbReference type="EC" id="3.1.3.15"/>
    </reaction>
</comment>
<comment type="cofactor">
    <cofactor evidence="1">
        <name>Mg(2+)</name>
        <dbReference type="ChEBI" id="CHEBI:18420"/>
    </cofactor>
</comment>
<comment type="cofactor">
    <cofactor evidence="1">
        <name>Zn(2+)</name>
        <dbReference type="ChEBI" id="CHEBI:29105"/>
    </cofactor>
</comment>
<comment type="pathway">
    <text evidence="1">Amino-acid biosynthesis; L-histidine biosynthesis; L-histidine from 5-phospho-alpha-D-ribose 1-diphosphate: step 6/9.</text>
</comment>
<comment type="pathway">
    <text evidence="1">Amino-acid biosynthesis; L-histidine biosynthesis; L-histidine from 5-phospho-alpha-D-ribose 1-diphosphate: step 8/9.</text>
</comment>
<comment type="subcellular location">
    <subcellularLocation>
        <location evidence="1">Cytoplasm</location>
    </subcellularLocation>
</comment>
<comment type="similarity">
    <text evidence="1">In the N-terminal section; belongs to the histidinol-phosphatase family.</text>
</comment>
<comment type="similarity">
    <text evidence="1">In the C-terminal section; belongs to the imidazoleglycerol-phosphate dehydratase family.</text>
</comment>
<accession>Q5WX93</accession>
<dbReference type="EC" id="3.1.3.15" evidence="1"/>
<dbReference type="EC" id="4.2.1.19" evidence="1"/>
<dbReference type="EMBL" id="CR628337">
    <property type="protein sequence ID" value="CAH15444.1"/>
    <property type="molecule type" value="Genomic_DNA"/>
</dbReference>
<dbReference type="RefSeq" id="WP_011215298.1">
    <property type="nucleotide sequence ID" value="NC_006369.1"/>
</dbReference>
<dbReference type="SMR" id="Q5WX93"/>
<dbReference type="KEGG" id="lpf:lpl1205"/>
<dbReference type="LegioList" id="lpl1205"/>
<dbReference type="HOGENOM" id="CLU_044308_0_0_6"/>
<dbReference type="UniPathway" id="UPA00031">
    <property type="reaction ID" value="UER00011"/>
</dbReference>
<dbReference type="UniPathway" id="UPA00031">
    <property type="reaction ID" value="UER00013"/>
</dbReference>
<dbReference type="Proteomes" id="UP000002517">
    <property type="component" value="Chromosome"/>
</dbReference>
<dbReference type="GO" id="GO:0005737">
    <property type="term" value="C:cytoplasm"/>
    <property type="evidence" value="ECO:0007669"/>
    <property type="project" value="UniProtKB-SubCell"/>
</dbReference>
<dbReference type="GO" id="GO:0004401">
    <property type="term" value="F:histidinol-phosphatase activity"/>
    <property type="evidence" value="ECO:0007669"/>
    <property type="project" value="UniProtKB-UniRule"/>
</dbReference>
<dbReference type="GO" id="GO:0004424">
    <property type="term" value="F:imidazoleglycerol-phosphate dehydratase activity"/>
    <property type="evidence" value="ECO:0007669"/>
    <property type="project" value="UniProtKB-UniRule"/>
</dbReference>
<dbReference type="GO" id="GO:0046872">
    <property type="term" value="F:metal ion binding"/>
    <property type="evidence" value="ECO:0007669"/>
    <property type="project" value="UniProtKB-KW"/>
</dbReference>
<dbReference type="GO" id="GO:0000105">
    <property type="term" value="P:L-histidine biosynthetic process"/>
    <property type="evidence" value="ECO:0007669"/>
    <property type="project" value="UniProtKB-UniRule"/>
</dbReference>
<dbReference type="CDD" id="cd07503">
    <property type="entry name" value="HAD_HisB-N"/>
    <property type="match status" value="1"/>
</dbReference>
<dbReference type="CDD" id="cd07914">
    <property type="entry name" value="IGPD"/>
    <property type="match status" value="1"/>
</dbReference>
<dbReference type="FunFam" id="3.30.230.40:FF:000001">
    <property type="entry name" value="Imidazoleglycerol-phosphate dehydratase HisB"/>
    <property type="match status" value="1"/>
</dbReference>
<dbReference type="FunFam" id="3.30.230.40:FF:000003">
    <property type="entry name" value="Imidazoleglycerol-phosphate dehydratase HisB"/>
    <property type="match status" value="1"/>
</dbReference>
<dbReference type="Gene3D" id="3.40.50.1000">
    <property type="entry name" value="HAD superfamily/HAD-like"/>
    <property type="match status" value="1"/>
</dbReference>
<dbReference type="Gene3D" id="3.30.230.40">
    <property type="entry name" value="Imidazole glycerol phosphate dehydratase, domain 1"/>
    <property type="match status" value="2"/>
</dbReference>
<dbReference type="HAMAP" id="MF_01022">
    <property type="entry name" value="Bifunc_HisB"/>
    <property type="match status" value="1"/>
</dbReference>
<dbReference type="HAMAP" id="MF_00076">
    <property type="entry name" value="HisB"/>
    <property type="match status" value="1"/>
</dbReference>
<dbReference type="InterPro" id="IPR036412">
    <property type="entry name" value="HAD-like_sf"/>
</dbReference>
<dbReference type="InterPro" id="IPR006549">
    <property type="entry name" value="HAD-SF_hydro_IIIA"/>
</dbReference>
<dbReference type="InterPro" id="IPR023214">
    <property type="entry name" value="HAD_sf"/>
</dbReference>
<dbReference type="InterPro" id="IPR020566">
    <property type="entry name" value="His_synth_bifunc_HisB"/>
</dbReference>
<dbReference type="InterPro" id="IPR005954">
    <property type="entry name" value="HisB_N"/>
</dbReference>
<dbReference type="InterPro" id="IPR006543">
    <property type="entry name" value="Histidinol-phos"/>
</dbReference>
<dbReference type="InterPro" id="IPR038494">
    <property type="entry name" value="IGPD_sf"/>
</dbReference>
<dbReference type="InterPro" id="IPR000807">
    <property type="entry name" value="ImidazoleglycerolP_deHydtase"/>
</dbReference>
<dbReference type="InterPro" id="IPR020565">
    <property type="entry name" value="ImidazoleglycerP_deHydtase_CS"/>
</dbReference>
<dbReference type="InterPro" id="IPR020568">
    <property type="entry name" value="Ribosomal_Su5_D2-typ_SF"/>
</dbReference>
<dbReference type="NCBIfam" id="TIGR01662">
    <property type="entry name" value="HAD-SF-IIIA"/>
    <property type="match status" value="1"/>
</dbReference>
<dbReference type="NCBIfam" id="TIGR01261">
    <property type="entry name" value="hisB_Nterm"/>
    <property type="match status" value="1"/>
</dbReference>
<dbReference type="NCBIfam" id="TIGR01656">
    <property type="entry name" value="Histidinol-ppas"/>
    <property type="match status" value="1"/>
</dbReference>
<dbReference type="NCBIfam" id="NF002111">
    <property type="entry name" value="PRK00951.2-1"/>
    <property type="match status" value="1"/>
</dbReference>
<dbReference type="NCBIfam" id="NF003937">
    <property type="entry name" value="PRK05446.1"/>
    <property type="match status" value="1"/>
</dbReference>
<dbReference type="PANTHER" id="PTHR23133:SF2">
    <property type="entry name" value="IMIDAZOLEGLYCEROL-PHOSPHATE DEHYDRATASE"/>
    <property type="match status" value="1"/>
</dbReference>
<dbReference type="PANTHER" id="PTHR23133">
    <property type="entry name" value="IMIDAZOLEGLYCEROL-PHOSPHATE DEHYDRATASE HIS7"/>
    <property type="match status" value="1"/>
</dbReference>
<dbReference type="Pfam" id="PF13242">
    <property type="entry name" value="Hydrolase_like"/>
    <property type="match status" value="1"/>
</dbReference>
<dbReference type="Pfam" id="PF00475">
    <property type="entry name" value="IGPD"/>
    <property type="match status" value="1"/>
</dbReference>
<dbReference type="SUPFAM" id="SSF56784">
    <property type="entry name" value="HAD-like"/>
    <property type="match status" value="1"/>
</dbReference>
<dbReference type="SUPFAM" id="SSF54211">
    <property type="entry name" value="Ribosomal protein S5 domain 2-like"/>
    <property type="match status" value="2"/>
</dbReference>
<dbReference type="PROSITE" id="PS00954">
    <property type="entry name" value="IGP_DEHYDRATASE_1"/>
    <property type="match status" value="1"/>
</dbReference>
<dbReference type="PROSITE" id="PS00955">
    <property type="entry name" value="IGP_DEHYDRATASE_2"/>
    <property type="match status" value="1"/>
</dbReference>
<feature type="chain" id="PRO_0000158213" description="Histidine biosynthesis bifunctional protein HisB">
    <location>
        <begin position="1"/>
        <end position="352"/>
    </location>
</feature>
<feature type="region of interest" description="Histidinol-phosphatase" evidence="1">
    <location>
        <begin position="1"/>
        <end position="163"/>
    </location>
</feature>
<feature type="region of interest" description="Imidazoleglycerol-phosphate dehydratase" evidence="1">
    <location>
        <begin position="164"/>
        <end position="352"/>
    </location>
</feature>
<feature type="active site" description="Nucleophile" evidence="1">
    <location>
        <position position="8"/>
    </location>
</feature>
<feature type="active site" description="Proton donor" evidence="1">
    <location>
        <position position="10"/>
    </location>
</feature>
<feature type="binding site" evidence="1">
    <location>
        <position position="8"/>
    </location>
    <ligand>
        <name>Mg(2+)</name>
        <dbReference type="ChEBI" id="CHEBI:18420"/>
    </ligand>
</feature>
<feature type="binding site" evidence="1">
    <location>
        <position position="10"/>
    </location>
    <ligand>
        <name>Mg(2+)</name>
        <dbReference type="ChEBI" id="CHEBI:18420"/>
    </ligand>
</feature>
<feature type="binding site" evidence="1">
    <location>
        <position position="91"/>
    </location>
    <ligand>
        <name>Zn(2+)</name>
        <dbReference type="ChEBI" id="CHEBI:29105"/>
    </ligand>
</feature>
<feature type="binding site" evidence="1">
    <location>
        <position position="93"/>
    </location>
    <ligand>
        <name>Zn(2+)</name>
        <dbReference type="ChEBI" id="CHEBI:29105"/>
    </ligand>
</feature>
<feature type="binding site" evidence="1">
    <location>
        <position position="99"/>
    </location>
    <ligand>
        <name>Zn(2+)</name>
        <dbReference type="ChEBI" id="CHEBI:29105"/>
    </ligand>
</feature>
<feature type="binding site" evidence="1">
    <location>
        <position position="101"/>
    </location>
    <ligand>
        <name>Zn(2+)</name>
        <dbReference type="ChEBI" id="CHEBI:29105"/>
    </ligand>
</feature>
<feature type="binding site" evidence="1">
    <location>
        <position position="128"/>
    </location>
    <ligand>
        <name>Mg(2+)</name>
        <dbReference type="ChEBI" id="CHEBI:18420"/>
    </ligand>
</feature>
<keyword id="KW-0028">Amino-acid biosynthesis</keyword>
<keyword id="KW-0963">Cytoplasm</keyword>
<keyword id="KW-0368">Histidine biosynthesis</keyword>
<keyword id="KW-0378">Hydrolase</keyword>
<keyword id="KW-0456">Lyase</keyword>
<keyword id="KW-0460">Magnesium</keyword>
<keyword id="KW-0479">Metal-binding</keyword>
<keyword id="KW-0511">Multifunctional enzyme</keyword>
<keyword id="KW-0862">Zinc</keyword>
<sequence>MKKILFIDRDGTLVEEPFDFQVDSLDKIKLTSGVIPALLQLQKAGFTFIMVSNQNGIGTVAFPEEDFAVCHEFILDLFSSQGILFDEIFICPHTPEDNCICRKPKTGLLESYLKETAFAKQYSWVIGDRDTDKEFADNLGVNFLPISKTHTWEMVASAIINDARKASVQRKTKETAVDLSVQLDSDQTSVIDTPIPFFTHMLEQVAKHGGFDLRLQASGDLEVDEHHLIEDTAIALGEAIRTALGDKWGINRYGYTLPMDESLATIAIDISGRSFCDFKGQFTREFIGGMATEMIPHFFQSLSSALGATIHIEVTGINHHHMIEACFKVLGRALRQACSRTNNYLPSTKGVL</sequence>
<evidence type="ECO:0000255" key="1">
    <source>
        <dbReference type="HAMAP-Rule" id="MF_01022"/>
    </source>
</evidence>